<organism>
    <name type="scientific">Maridesulfovibrio salexigens (strain ATCC 14822 / DSM 2638 / NCIMB 8403 / VKM B-1763)</name>
    <name type="common">Desulfovibrio salexigens</name>
    <dbReference type="NCBI Taxonomy" id="526222"/>
    <lineage>
        <taxon>Bacteria</taxon>
        <taxon>Pseudomonadati</taxon>
        <taxon>Thermodesulfobacteriota</taxon>
        <taxon>Desulfovibrionia</taxon>
        <taxon>Desulfovibrionales</taxon>
        <taxon>Desulfovibrionaceae</taxon>
        <taxon>Maridesulfovibrio</taxon>
    </lineage>
</organism>
<comment type="function">
    <text evidence="1">One of the primary rRNA binding proteins, it binds directly to 16S rRNA where it nucleates assembly of the head domain of the 30S subunit. Is located at the subunit interface close to the decoding center, probably blocks exit of the E-site tRNA.</text>
</comment>
<comment type="subunit">
    <text evidence="1">Part of the 30S ribosomal subunit. Contacts proteins S9 and S11.</text>
</comment>
<comment type="similarity">
    <text evidence="1">Belongs to the universal ribosomal protein uS7 family.</text>
</comment>
<gene>
    <name evidence="1" type="primary">rpsG</name>
    <name type="ordered locus">Desal_1182</name>
</gene>
<accession>C6C182</accession>
<feature type="chain" id="PRO_1000206398" description="Small ribosomal subunit protein uS7">
    <location>
        <begin position="1"/>
        <end position="156"/>
    </location>
</feature>
<reference key="1">
    <citation type="submission" date="2009-06" db="EMBL/GenBank/DDBJ databases">
        <title>Complete sequence of Desulfovibrio salexigens DSM 2638.</title>
        <authorList>
            <consortium name="US DOE Joint Genome Institute"/>
            <person name="Lucas S."/>
            <person name="Copeland A."/>
            <person name="Lapidus A."/>
            <person name="Glavina del Rio T."/>
            <person name="Tice H."/>
            <person name="Bruce D."/>
            <person name="Goodwin L."/>
            <person name="Pitluck S."/>
            <person name="Munk A.C."/>
            <person name="Brettin T."/>
            <person name="Detter J.C."/>
            <person name="Han C."/>
            <person name="Tapia R."/>
            <person name="Larimer F."/>
            <person name="Land M."/>
            <person name="Hauser L."/>
            <person name="Kyrpides N."/>
            <person name="Anderson I."/>
            <person name="Wall J.D."/>
            <person name="Arkin A.P."/>
            <person name="Dehal P."/>
            <person name="Chivian D."/>
            <person name="Giles B."/>
            <person name="Hazen T.C."/>
        </authorList>
    </citation>
    <scope>NUCLEOTIDE SEQUENCE [LARGE SCALE GENOMIC DNA]</scope>
    <source>
        <strain>ATCC 14822 / DSM 2638 / NCIMB 8403 / VKM B-1763</strain>
    </source>
</reference>
<sequence length="156" mass="17867">MPRKGPVPKRQILPDPVYGSQLATKFMNRLMYDGKKSVSENIFYQALEFLGDKTQEDPIKAFEKAVENVKPHVEVKSRRVGGATYQVPVEVRPDRQVSLAIRWLINFARSRGEKGMVARLSGEFLDAYNKRGGAVKKKEDTHRMAEANKAFAHYRW</sequence>
<protein>
    <recommendedName>
        <fullName evidence="1">Small ribosomal subunit protein uS7</fullName>
    </recommendedName>
    <alternativeName>
        <fullName evidence="2">30S ribosomal protein S7</fullName>
    </alternativeName>
</protein>
<keyword id="KW-1185">Reference proteome</keyword>
<keyword id="KW-0687">Ribonucleoprotein</keyword>
<keyword id="KW-0689">Ribosomal protein</keyword>
<keyword id="KW-0694">RNA-binding</keyword>
<keyword id="KW-0699">rRNA-binding</keyword>
<keyword id="KW-0820">tRNA-binding</keyword>
<evidence type="ECO:0000255" key="1">
    <source>
        <dbReference type="HAMAP-Rule" id="MF_00480"/>
    </source>
</evidence>
<evidence type="ECO:0000305" key="2"/>
<proteinExistence type="inferred from homology"/>
<name>RS7_MARSD</name>
<dbReference type="EMBL" id="CP001649">
    <property type="protein sequence ID" value="ACS79245.1"/>
    <property type="molecule type" value="Genomic_DNA"/>
</dbReference>
<dbReference type="RefSeq" id="WP_015851064.1">
    <property type="nucleotide sequence ID" value="NC_012881.1"/>
</dbReference>
<dbReference type="SMR" id="C6C182"/>
<dbReference type="STRING" id="526222.Desal_1182"/>
<dbReference type="KEGG" id="dsa:Desal_1182"/>
<dbReference type="eggNOG" id="COG0049">
    <property type="taxonomic scope" value="Bacteria"/>
</dbReference>
<dbReference type="HOGENOM" id="CLU_072226_1_1_7"/>
<dbReference type="OrthoDB" id="9807653at2"/>
<dbReference type="Proteomes" id="UP000002601">
    <property type="component" value="Chromosome"/>
</dbReference>
<dbReference type="GO" id="GO:0015935">
    <property type="term" value="C:small ribosomal subunit"/>
    <property type="evidence" value="ECO:0007669"/>
    <property type="project" value="InterPro"/>
</dbReference>
<dbReference type="GO" id="GO:0019843">
    <property type="term" value="F:rRNA binding"/>
    <property type="evidence" value="ECO:0007669"/>
    <property type="project" value="UniProtKB-UniRule"/>
</dbReference>
<dbReference type="GO" id="GO:0003735">
    <property type="term" value="F:structural constituent of ribosome"/>
    <property type="evidence" value="ECO:0007669"/>
    <property type="project" value="InterPro"/>
</dbReference>
<dbReference type="GO" id="GO:0000049">
    <property type="term" value="F:tRNA binding"/>
    <property type="evidence" value="ECO:0007669"/>
    <property type="project" value="UniProtKB-UniRule"/>
</dbReference>
<dbReference type="GO" id="GO:0006412">
    <property type="term" value="P:translation"/>
    <property type="evidence" value="ECO:0007669"/>
    <property type="project" value="UniProtKB-UniRule"/>
</dbReference>
<dbReference type="CDD" id="cd14869">
    <property type="entry name" value="uS7_Bacteria"/>
    <property type="match status" value="1"/>
</dbReference>
<dbReference type="FunFam" id="1.10.455.10:FF:000001">
    <property type="entry name" value="30S ribosomal protein S7"/>
    <property type="match status" value="1"/>
</dbReference>
<dbReference type="Gene3D" id="1.10.455.10">
    <property type="entry name" value="Ribosomal protein S7 domain"/>
    <property type="match status" value="1"/>
</dbReference>
<dbReference type="HAMAP" id="MF_00480_B">
    <property type="entry name" value="Ribosomal_uS7_B"/>
    <property type="match status" value="1"/>
</dbReference>
<dbReference type="InterPro" id="IPR000235">
    <property type="entry name" value="Ribosomal_uS7"/>
</dbReference>
<dbReference type="InterPro" id="IPR005717">
    <property type="entry name" value="Ribosomal_uS7_bac/org-type"/>
</dbReference>
<dbReference type="InterPro" id="IPR020606">
    <property type="entry name" value="Ribosomal_uS7_CS"/>
</dbReference>
<dbReference type="InterPro" id="IPR023798">
    <property type="entry name" value="Ribosomal_uS7_dom"/>
</dbReference>
<dbReference type="InterPro" id="IPR036823">
    <property type="entry name" value="Ribosomal_uS7_dom_sf"/>
</dbReference>
<dbReference type="NCBIfam" id="TIGR01029">
    <property type="entry name" value="rpsG_bact"/>
    <property type="match status" value="1"/>
</dbReference>
<dbReference type="PANTHER" id="PTHR11205">
    <property type="entry name" value="RIBOSOMAL PROTEIN S7"/>
    <property type="match status" value="1"/>
</dbReference>
<dbReference type="Pfam" id="PF00177">
    <property type="entry name" value="Ribosomal_S7"/>
    <property type="match status" value="1"/>
</dbReference>
<dbReference type="PIRSF" id="PIRSF002122">
    <property type="entry name" value="RPS7p_RPS7a_RPS5e_RPS7o"/>
    <property type="match status" value="1"/>
</dbReference>
<dbReference type="SUPFAM" id="SSF47973">
    <property type="entry name" value="Ribosomal protein S7"/>
    <property type="match status" value="1"/>
</dbReference>
<dbReference type="PROSITE" id="PS00052">
    <property type="entry name" value="RIBOSOMAL_S7"/>
    <property type="match status" value="1"/>
</dbReference>